<proteinExistence type="inferred from homology"/>
<reference key="1">
    <citation type="submission" date="2008-02" db="EMBL/GenBank/DDBJ databases">
        <title>Complete sequence of Escherichia coli C str. ATCC 8739.</title>
        <authorList>
            <person name="Copeland A."/>
            <person name="Lucas S."/>
            <person name="Lapidus A."/>
            <person name="Glavina del Rio T."/>
            <person name="Dalin E."/>
            <person name="Tice H."/>
            <person name="Bruce D."/>
            <person name="Goodwin L."/>
            <person name="Pitluck S."/>
            <person name="Kiss H."/>
            <person name="Brettin T."/>
            <person name="Detter J.C."/>
            <person name="Han C."/>
            <person name="Kuske C.R."/>
            <person name="Schmutz J."/>
            <person name="Larimer F."/>
            <person name="Land M."/>
            <person name="Hauser L."/>
            <person name="Kyrpides N."/>
            <person name="Mikhailova N."/>
            <person name="Ingram L."/>
            <person name="Richardson P."/>
        </authorList>
    </citation>
    <scope>NUCLEOTIDE SEQUENCE [LARGE SCALE GENOMIC DNA]</scope>
    <source>
        <strain>ATCC 8739 / DSM 1576 / NBRC 3972 / NCIMB 8545 / WDCM 00012 / Crooks</strain>
    </source>
</reference>
<dbReference type="EMBL" id="CP000946">
    <property type="protein sequence ID" value="ACA77064.1"/>
    <property type="molecule type" value="Genomic_DNA"/>
</dbReference>
<dbReference type="RefSeq" id="WP_000921621.1">
    <property type="nucleotide sequence ID" value="NZ_MTFT01000028.1"/>
</dbReference>
<dbReference type="SMR" id="B1IXT8"/>
<dbReference type="KEGG" id="ecl:EcolC_1400"/>
<dbReference type="HOGENOM" id="CLU_030805_9_1_6"/>
<dbReference type="CDD" id="cd00885">
    <property type="entry name" value="cinA"/>
    <property type="match status" value="1"/>
</dbReference>
<dbReference type="Gene3D" id="3.40.980.10">
    <property type="entry name" value="MoaB/Mog-like domain"/>
    <property type="match status" value="1"/>
</dbReference>
<dbReference type="HAMAP" id="MF_00226_B">
    <property type="entry name" value="CinA_B"/>
    <property type="match status" value="1"/>
</dbReference>
<dbReference type="InterPro" id="IPR050101">
    <property type="entry name" value="CinA"/>
</dbReference>
<dbReference type="InterPro" id="IPR036653">
    <property type="entry name" value="CinA-like_C"/>
</dbReference>
<dbReference type="InterPro" id="IPR008135">
    <property type="entry name" value="Competence-induced_CinA"/>
</dbReference>
<dbReference type="InterPro" id="IPR036425">
    <property type="entry name" value="MoaB/Mog-like_dom_sf"/>
</dbReference>
<dbReference type="InterPro" id="IPR001453">
    <property type="entry name" value="MoaB/Mog_dom"/>
</dbReference>
<dbReference type="NCBIfam" id="TIGR00200">
    <property type="entry name" value="cinA_nterm"/>
    <property type="match status" value="1"/>
</dbReference>
<dbReference type="NCBIfam" id="TIGR00177">
    <property type="entry name" value="molyb_syn"/>
    <property type="match status" value="1"/>
</dbReference>
<dbReference type="NCBIfam" id="NF002978">
    <property type="entry name" value="PRK03673.1"/>
    <property type="match status" value="1"/>
</dbReference>
<dbReference type="PANTHER" id="PTHR13939">
    <property type="entry name" value="NICOTINAMIDE-NUCLEOTIDE AMIDOHYDROLASE PNCC"/>
    <property type="match status" value="1"/>
</dbReference>
<dbReference type="PANTHER" id="PTHR13939:SF0">
    <property type="entry name" value="NMN AMIDOHYDROLASE-LIKE PROTEIN YFAY"/>
    <property type="match status" value="1"/>
</dbReference>
<dbReference type="Pfam" id="PF00994">
    <property type="entry name" value="MoCF_biosynth"/>
    <property type="match status" value="1"/>
</dbReference>
<dbReference type="PIRSF" id="PIRSF006728">
    <property type="entry name" value="CinA"/>
    <property type="match status" value="1"/>
</dbReference>
<dbReference type="SMART" id="SM00852">
    <property type="entry name" value="MoCF_biosynth"/>
    <property type="match status" value="1"/>
</dbReference>
<dbReference type="SUPFAM" id="SSF142433">
    <property type="entry name" value="CinA-like"/>
    <property type="match status" value="1"/>
</dbReference>
<dbReference type="SUPFAM" id="SSF53218">
    <property type="entry name" value="Molybdenum cofactor biosynthesis proteins"/>
    <property type="match status" value="1"/>
</dbReference>
<organism>
    <name type="scientific">Escherichia coli (strain ATCC 8739 / DSM 1576 / NBRC 3972 / NCIMB 8545 / WDCM 00012 / Crooks)</name>
    <dbReference type="NCBI Taxonomy" id="481805"/>
    <lineage>
        <taxon>Bacteria</taxon>
        <taxon>Pseudomonadati</taxon>
        <taxon>Pseudomonadota</taxon>
        <taxon>Gammaproteobacteria</taxon>
        <taxon>Enterobacterales</taxon>
        <taxon>Enterobacteriaceae</taxon>
        <taxon>Escherichia</taxon>
    </lineage>
</organism>
<feature type="chain" id="PRO_1000078175" description="CinA-like protein">
    <location>
        <begin position="1"/>
        <end position="400"/>
    </location>
</feature>
<name>CINAL_ECOLC</name>
<gene>
    <name type="ordered locus">EcolC_1400</name>
</gene>
<protein>
    <recommendedName>
        <fullName evidence="1">CinA-like protein</fullName>
    </recommendedName>
</protein>
<accession>B1IXT8</accession>
<comment type="similarity">
    <text evidence="1">Belongs to the CinA family.</text>
</comment>
<evidence type="ECO:0000255" key="1">
    <source>
        <dbReference type="HAMAP-Rule" id="MF_00226"/>
    </source>
</evidence>
<sequence>MLKVEMLSTGDEVLHGQIVDTNAAWLADFFFHQGLPLSRRNTVGDNLDDLVTILRERSQHADVLIVNGGLGPTSDDLSALAAATAKGEGLVLHEAWLKEMERYFHERGRVMAPSNRKQAELPASAEFINNPVGTACGFAVQLNRCLMFFTPGVPSEFKVMVEHEILPRLRERFSLPQPPVCLRLTTFGRSESDLAQSLDTLQLPPGVTMGYRSSMPIIELKLTGPASEQQAMEKLWLDVKRVAGQSVIFEGTEGLPAQISRELQNRQFSLTLSEQFTGGLLALQLSRAGAPLLACEVVPSQEETLAQTAHWITERRANHFAGLALAVSGFENEHLNFALATPDGTFALRVRFSTTRYSLAIRQEVCAMMALNMLRRWLNGQDIASEHGWIEVVESMTLSV</sequence>